<evidence type="ECO:0000255" key="1"/>
<evidence type="ECO:0000255" key="2">
    <source>
        <dbReference type="PROSITE-ProRule" id="PRU00539"/>
    </source>
</evidence>
<evidence type="ECO:0000255" key="3">
    <source>
        <dbReference type="PROSITE-ProRule" id="PRU01079"/>
    </source>
</evidence>
<evidence type="ECO:0000269" key="4">
    <source>
    </source>
</evidence>
<evidence type="ECO:0000269" key="5">
    <source>
    </source>
</evidence>
<evidence type="ECO:0000269" key="6">
    <source ref="3"/>
</evidence>
<evidence type="ECO:0000305" key="7"/>
<reference key="1">
    <citation type="journal article" date="1982" name="Proc. Natl. Acad. Sci. U.S.A.">
        <title>Nucleotide sequence of tobacco mosaic virus RNA.</title>
        <authorList>
            <person name="Goelet P."/>
            <person name="Lomonossoff G.P."/>
            <person name="Butler P.J.G."/>
            <person name="Akam M.E."/>
            <person name="Gait M.J."/>
            <person name="Karn J."/>
        </authorList>
    </citation>
    <scope>NUCLEOTIDE SEQUENCE [GENOMIC RNA]</scope>
</reference>
<reference key="2">
    <citation type="journal article" date="2000" name="Virology">
        <title>Functions of the 126- and 183-kDa proteins of tobacco mosaic virus.</title>
        <authorList>
            <person name="Lewandowski D.J."/>
            <person name="Dawson W.O."/>
        </authorList>
    </citation>
    <scope>CHARACTERIZATION</scope>
</reference>
<reference key="3">
    <citation type="journal article" date="2004" name="J. Gen. Plant Pathol.">
        <title>Interaction between the helicase domain of the tobacco mosaic virus replicase and a tobacco arginine decarboxylase.</title>
        <authorList>
            <person name="Shimizu T."/>
            <person name="Yamaji Y."/>
            <person name="Ogasawara Y."/>
            <person name="Hamada K."/>
            <person name="Sakurai K."/>
            <person name="Kobayashi T."/>
            <person name="Watanabe T."/>
            <person name="Hibi T."/>
        </authorList>
    </citation>
    <scope>INTERACTION WITH NICOTIANA TABACUM ADC1A</scope>
    <source>
        <strain>cv. Xanthi</strain>
    </source>
</reference>
<reference key="4">
    <citation type="journal article" date="2007" name="J. Virol.">
        <title>Modification of small RNAs associated with suppression of RNA silencing by tobamovirus replicase protein.</title>
        <authorList>
            <person name="Vogler H."/>
            <person name="Akbergenov R."/>
            <person name="Shivaprasad P.V."/>
            <person name="Dang V."/>
            <person name="Fasler M."/>
            <person name="Kwon M.-O."/>
            <person name="Zhanybekova S."/>
            <person name="Hohn T."/>
            <person name="Heinlein M."/>
        </authorList>
    </citation>
    <scope>FUNCTION OF THE REPLICASE SMALL SUBUNIT</scope>
    <scope>MUTAGENESIS OF CYS-349</scope>
</reference>
<name>RDRP_TMV</name>
<organismHost>
    <name type="scientific">Nicotiana tabacum</name>
    <name type="common">Common tobacco</name>
    <dbReference type="NCBI Taxonomy" id="4097"/>
</organismHost>
<sequence>MAYTQTATTSALLDTVRGNNSLVNDLAKRRLYDTAVEEFNARDRRPKVNFSKVISEEQTLIATRAYPEFQITFYNTQNAVHSLAGGLRSLELEYLMMQIPYGSLTYDIGGNFASHLFKGRAYVHCCMPNLDVRDIMRHEGQKDSIELYLSRLERGGKTVPNFQKEAFDRYAEIPEDAVCHNTFQTMRHQPMQQSGRVYAIALHSIYDIPADEFGAALLRKNVHTCYAAFHFSENLLLEDSYVNLDEINACFSRDGDKLTFSFASESTLNYCHSYSNILKYVCKTYFPASNREVYMKEFLVTRVNTWFCKFSRIDTFLLYKGVAHKSVDSEQFYTAMEDAWHYKKTLAMCNSERILLEDSSSVNYWFPKMRDMVIVPLFDISLETSKRTRKEVLVSKDFVFTVLNHIRTYQAKALTYANVLSFVESIRSRVIINGVTARSEWDVDKSLLQSLSMTFYLHTKLAVLKDDLLISKFSLGSKTVCQHVWDEISLAFGNAFPSVKERLLNRKLIRVAGDALEIRVPDLYVTFHDRLVTEYKASVDMPALDIRKKMEETEVMYNALSELSVLRESDKFDVDVFSQMCQSLEVDPMTAAKVIVAVMSNESGLTLTFERPTEANVALALQDQEKASEGALVVTSREVEEPSMKGSMARGELQLAGLAGDHPESSYSKNEEIESLEQFHMATADSLIRKQMSSIVYTGPIKVQQMKNFIDSLVASLSAAVSNLVKILKDTAAIDLETRQKFGVLDVASRKWLIKPTAKSHAWGVVETHARKYHVALLEYDEQGVVTCDDWRRVAVSSESVVYSDMAKLRTLRRLLRNGEPHVSSAKVVLVDGVPGCGKTKEILSRVNFDEDLILVPGKQAAEMIRRRANSSGIIVATKDNVKTVDSFMMNFGKSTRCQFKRLFIDEGLMLHTGCVNFLVAMSLCEIAYVYGDTQQIPYINRVSGFPYPAHFAKLEVDEVETRRTTLRCPADVTHYLNRRYEGFVMSTSSVKKSVSQEMVGGAAVINPISKPLHGKILTFTQSDKEALLSRGYSDVHTVHEVQGETYSDVSLVRLTPTPVSIIAGDSPHVLVALSRHTCSLKYYTVVMDPLVSIIRDLEKLSSYLLDMYKVDAGTQXQLQIDSVFKGSNLFVAAPKTGDISDMQFYYDKCLPGNSTMMNNFDAVTMRLTDISLNVKDCILDMSKSVAAPKDQIKPLIPMVRTAAEMPRQTGLLENLVAMIKRNFNAPELSGIIDIENTASLVVDKFFDSYLLKEKRKPNKNVSLFSRESLNRWLEKQEQVTIGQLADFDFVDLPAVDQYRHMYKAQPKQKLDTSIQTEYPALQTIVYHSKKINAIFGPLFSELTRQLLDSVDSSRFLFFTRKTPAQIEDFFGDLDSHVPMDVLELDISKYDKSQNEFHCAVEYEIWRRLGFEDFLGEVWKQGHRKTTLKDYTAGIKTCIWYQRKSGDVTTFIGNTVIIAACLASMLPMEKIIKGAFCGDDSLLYFPKGCEFPDVQHSANLMWNFEAKLFKKQYGYFCGRYVIHHDRGCIVYYDPLKLISKLGAKHIKDWEHLEEFRRSLCDVAVSLNNCAYYTQLDDAVWEVHKTAPPGSFVYKSLVKYLSDKVLFRSLFIDGSSC</sequence>
<organism>
    <name type="scientific">Tobacco mosaic virus (strain vulgare)</name>
    <name type="common">TMV</name>
    <name type="synonym">Tobacco mosaic virus (strain U1)</name>
    <dbReference type="NCBI Taxonomy" id="12243"/>
    <lineage>
        <taxon>Viruses</taxon>
        <taxon>Riboviria</taxon>
        <taxon>Orthornavirae</taxon>
        <taxon>Kitrinoviricota</taxon>
        <taxon>Alsuviricetes</taxon>
        <taxon>Martellivirales</taxon>
        <taxon>Virgaviridae</taxon>
        <taxon>Tobamovirus</taxon>
        <taxon>Tobacco mosaic virus</taxon>
    </lineage>
</organism>
<accession>P03586</accession>
<accession>O41341</accession>
<proteinExistence type="evidence at protein level"/>
<keyword id="KW-0067">ATP-binding</keyword>
<keyword id="KW-0347">Helicase</keyword>
<keyword id="KW-0945">Host-virus interaction</keyword>
<keyword id="KW-0378">Hydrolase</keyword>
<keyword id="KW-1090">Inhibition of host innate immune response by virus</keyword>
<keyword id="KW-0547">Nucleotide-binding</keyword>
<keyword id="KW-0548">Nucleotidyltransferase</keyword>
<keyword id="KW-1185">Reference proteome</keyword>
<keyword id="KW-1159">RNA suppression of termination</keyword>
<keyword id="KW-0696">RNA-directed RNA polymerase</keyword>
<keyword id="KW-0941">Suppressor of RNA silencing</keyword>
<keyword id="KW-0808">Transferase</keyword>
<keyword id="KW-0899">Viral immunoevasion</keyword>
<keyword id="KW-0693">Viral RNA replication</keyword>
<dbReference type="EC" id="2.1.1.-"/>
<dbReference type="EC" id="2.7.7.-"/>
<dbReference type="EC" id="2.7.7.48"/>
<dbReference type="EC" id="3.6.4.13"/>
<dbReference type="EMBL" id="V01408">
    <property type="protein sequence ID" value="CAA24688.1"/>
    <property type="molecule type" value="Unassigned_RNA"/>
</dbReference>
<dbReference type="EMBL" id="V01409">
    <property type="status" value="NOT_ANNOTATED_CDS"/>
    <property type="molecule type" value="Genomic_RNA"/>
</dbReference>
<dbReference type="PIR" id="A04194">
    <property type="entry name" value="WMTM18"/>
</dbReference>
<dbReference type="RefSeq" id="NP_056764.1">
    <property type="nucleotide sequence ID" value="NC_001367.1"/>
</dbReference>
<dbReference type="BioGRID" id="3509210">
    <property type="interactions" value="1"/>
</dbReference>
<dbReference type="DIP" id="DIP-29269N"/>
<dbReference type="IntAct" id="P03586">
    <property type="interactions" value="2"/>
</dbReference>
<dbReference type="GeneID" id="1494081"/>
<dbReference type="KEGG" id="vg:1494081"/>
<dbReference type="Proteomes" id="UP000000522">
    <property type="component" value="Segment"/>
</dbReference>
<dbReference type="GO" id="GO:0005524">
    <property type="term" value="F:ATP binding"/>
    <property type="evidence" value="ECO:0007669"/>
    <property type="project" value="UniProtKB-KW"/>
</dbReference>
<dbReference type="GO" id="GO:0016887">
    <property type="term" value="F:ATP hydrolysis activity"/>
    <property type="evidence" value="ECO:0007669"/>
    <property type="project" value="RHEA"/>
</dbReference>
<dbReference type="GO" id="GO:0008174">
    <property type="term" value="F:mRNA methyltransferase activity"/>
    <property type="evidence" value="ECO:0007669"/>
    <property type="project" value="InterPro"/>
</dbReference>
<dbReference type="GO" id="GO:0003723">
    <property type="term" value="F:RNA binding"/>
    <property type="evidence" value="ECO:0007669"/>
    <property type="project" value="InterPro"/>
</dbReference>
<dbReference type="GO" id="GO:0003724">
    <property type="term" value="F:RNA helicase activity"/>
    <property type="evidence" value="ECO:0007669"/>
    <property type="project" value="UniProtKB-EC"/>
</dbReference>
<dbReference type="GO" id="GO:0003968">
    <property type="term" value="F:RNA-directed RNA polymerase activity"/>
    <property type="evidence" value="ECO:0007669"/>
    <property type="project" value="UniProtKB-KW"/>
</dbReference>
<dbReference type="GO" id="GO:0006351">
    <property type="term" value="P:DNA-templated transcription"/>
    <property type="evidence" value="ECO:0007669"/>
    <property type="project" value="InterPro"/>
</dbReference>
<dbReference type="GO" id="GO:0016556">
    <property type="term" value="P:mRNA modification"/>
    <property type="evidence" value="ECO:0007669"/>
    <property type="project" value="InterPro"/>
</dbReference>
<dbReference type="GO" id="GO:0006396">
    <property type="term" value="P:RNA processing"/>
    <property type="evidence" value="ECO:0007669"/>
    <property type="project" value="InterPro"/>
</dbReference>
<dbReference type="GO" id="GO:0052170">
    <property type="term" value="P:symbiont-mediated suppression of host innate immune response"/>
    <property type="evidence" value="ECO:0007669"/>
    <property type="project" value="UniProtKB-KW"/>
</dbReference>
<dbReference type="GO" id="GO:0039694">
    <property type="term" value="P:viral RNA genome replication"/>
    <property type="evidence" value="ECO:0007669"/>
    <property type="project" value="InterPro"/>
</dbReference>
<dbReference type="CDD" id="cd23251">
    <property type="entry name" value="Virgaviridae_RdRp"/>
    <property type="match status" value="1"/>
</dbReference>
<dbReference type="Gene3D" id="3.30.450.420">
    <property type="match status" value="1"/>
</dbReference>
<dbReference type="Gene3D" id="3.40.50.300">
    <property type="entry name" value="P-loop containing nucleotide triphosphate hydrolases"/>
    <property type="match status" value="2"/>
</dbReference>
<dbReference type="InterPro" id="IPR027351">
    <property type="entry name" value="(+)RNA_virus_helicase_core_dom"/>
</dbReference>
<dbReference type="InterPro" id="IPR002588">
    <property type="entry name" value="Alphavirus-like_MT_dom"/>
</dbReference>
<dbReference type="InterPro" id="IPR043502">
    <property type="entry name" value="DNA/RNA_pol_sf"/>
</dbReference>
<dbReference type="InterPro" id="IPR027417">
    <property type="entry name" value="P-loop_NTPase"/>
</dbReference>
<dbReference type="InterPro" id="IPR001788">
    <property type="entry name" value="RNA-dep_RNA_pol_alsuvir"/>
</dbReference>
<dbReference type="InterPro" id="IPR007094">
    <property type="entry name" value="RNA-dir_pol_PSvirus"/>
</dbReference>
<dbReference type="InterPro" id="IPR049329">
    <property type="entry name" value="ToMV_Hel_N"/>
</dbReference>
<dbReference type="InterPro" id="IPR047310">
    <property type="entry name" value="Virgaviridae_RdRp"/>
</dbReference>
<dbReference type="Pfam" id="PF00978">
    <property type="entry name" value="RdRP_2"/>
    <property type="match status" value="1"/>
</dbReference>
<dbReference type="Pfam" id="PF20896">
    <property type="entry name" value="ToMV_Hel_N"/>
    <property type="match status" value="1"/>
</dbReference>
<dbReference type="Pfam" id="PF01443">
    <property type="entry name" value="Viral_helicase1"/>
    <property type="match status" value="1"/>
</dbReference>
<dbReference type="Pfam" id="PF01660">
    <property type="entry name" value="Vmethyltransf"/>
    <property type="match status" value="1"/>
</dbReference>
<dbReference type="SUPFAM" id="SSF56672">
    <property type="entry name" value="DNA/RNA polymerases"/>
    <property type="match status" value="1"/>
</dbReference>
<dbReference type="SUPFAM" id="SSF52540">
    <property type="entry name" value="P-loop containing nucleoside triphosphate hydrolases"/>
    <property type="match status" value="1"/>
</dbReference>
<dbReference type="PROSITE" id="PS51743">
    <property type="entry name" value="ALPHAVIRUS_MT"/>
    <property type="match status" value="1"/>
</dbReference>
<dbReference type="PROSITE" id="PS51657">
    <property type="entry name" value="PSRV_HELICASE"/>
    <property type="match status" value="1"/>
</dbReference>
<dbReference type="PROSITE" id="PS50507">
    <property type="entry name" value="RDRP_SSRNA_POS"/>
    <property type="match status" value="1"/>
</dbReference>
<feature type="chain" id="PRO_0000041162" description="Replicase large subunit">
    <location>
        <begin position="1"/>
        <end position="1616"/>
    </location>
</feature>
<feature type="chain" id="PRO_0000041163" description="Replicase small subunit">
    <location>
        <begin position="1"/>
        <end position="1116"/>
    </location>
</feature>
<feature type="domain" description="Alphavirus-like MT" evidence="3">
    <location>
        <begin position="72"/>
        <end position="281"/>
    </location>
</feature>
<feature type="domain" description="(+)RNA virus helicase ATP-binding">
    <location>
        <begin position="801"/>
        <end position="963"/>
    </location>
</feature>
<feature type="domain" description="(+)RNA virus helicase C-terminal">
    <location>
        <begin position="964"/>
        <end position="1116"/>
    </location>
</feature>
<feature type="domain" description="RdRp catalytic" evidence="2">
    <location>
        <begin position="1380"/>
        <end position="1493"/>
    </location>
</feature>
<feature type="region of interest" description="Methyltransferase" evidence="1">
    <location>
        <begin position="50"/>
        <end position="458"/>
    </location>
</feature>
<feature type="region of interest" description="Helicase" evidence="1">
    <location>
        <begin position="830"/>
        <end position="1085"/>
    </location>
</feature>
<feature type="binding site" evidence="1">
    <location>
        <begin position="833"/>
        <end position="840"/>
    </location>
    <ligand>
        <name>ATP</name>
        <dbReference type="ChEBI" id="CHEBI:30616"/>
    </ligand>
</feature>
<feature type="sequence variant">
    <original>T</original>
    <variation>S</variation>
    <location>
        <position position="9"/>
    </location>
</feature>
<feature type="sequence variant">
    <original>D</original>
    <variation>E</variation>
    <location>
        <position position="14"/>
    </location>
</feature>
<feature type="sequence variant">
    <original>S</original>
    <variation>T</variation>
    <location>
        <position position="21"/>
    </location>
</feature>
<feature type="sequence variant">
    <original>E</original>
    <variation>D</variation>
    <location>
        <position position="37"/>
    </location>
</feature>
<feature type="sequence variant">
    <original>E</original>
    <variation>A</variation>
    <location>
        <position position="638"/>
    </location>
</feature>
<feature type="mutagenesis site" description="Loss of RNA silencing suppression activity." evidence="5">
    <original>C</original>
    <variation>A</variation>
    <location>
        <position position="349"/>
    </location>
</feature>
<protein>
    <recommendedName>
        <fullName>Replicase large subunit</fullName>
        <ecNumber>2.1.1.-</ecNumber>
        <ecNumber>2.7.7.-</ecNumber>
        <ecNumber>2.7.7.48</ecNumber>
        <ecNumber>3.6.4.13</ecNumber>
    </recommendedName>
    <alternativeName>
        <fullName>183 kDa protein</fullName>
    </alternativeName>
    <alternativeName>
        <fullName>RNA-directed RNA polymerase</fullName>
    </alternativeName>
    <component>
        <recommendedName>
            <fullName>Replicase small subunit</fullName>
            <ecNumber>2.1.1.-</ecNumber>
            <ecNumber>2.7.7.-</ecNumber>
            <ecNumber>3.6.4.13</ecNumber>
        </recommendedName>
        <alternativeName>
            <fullName>126 kDa protein</fullName>
        </alternativeName>
        <alternativeName>
            <fullName>Methyltransferase/RNA helicase</fullName>
            <shortName>MT/HEL</shortName>
        </alternativeName>
    </component>
</protein>
<comment type="function">
    <molecule>Replicase large subunit</molecule>
    <text evidence="5">Is an RNA-dependent RNA polymerase active in viral RNA replication.</text>
</comment>
<comment type="function">
    <molecule>Replicase small subunit</molecule>
    <text evidence="5 7">Is a methyltransferase active in RNA capping and an RNA helicase. Methyltransferase displays a cytoplasmic capping enzyme activity. This function is necessary since all viral RNAs are synthesized in the cytoplasm, and host capping enzymes are restricted to the nucleus. Helicase region probably exhibits NTPase and RNA unwinding activities (Potential). It also acts as a suppressor of RNA-mediated gene silencing, also known as post-transcriptional gene silencing (PTGS), a mechanism of plant viral defense that limits the accumulation of viral RNAs. May mediate silencing suppression through either inhibition of HEN1-mediated siRNA or siRNA demethylation.</text>
</comment>
<comment type="catalytic activity">
    <reaction evidence="2">
        <text>RNA(n) + a ribonucleoside 5'-triphosphate = RNA(n+1) + diphosphate</text>
        <dbReference type="Rhea" id="RHEA:21248"/>
        <dbReference type="Rhea" id="RHEA-COMP:14527"/>
        <dbReference type="Rhea" id="RHEA-COMP:17342"/>
        <dbReference type="ChEBI" id="CHEBI:33019"/>
        <dbReference type="ChEBI" id="CHEBI:61557"/>
        <dbReference type="ChEBI" id="CHEBI:140395"/>
        <dbReference type="EC" id="2.7.7.48"/>
    </reaction>
</comment>
<comment type="catalytic activity">
    <reaction>
        <text>ATP + H2O = ADP + phosphate + H(+)</text>
        <dbReference type="Rhea" id="RHEA:13065"/>
        <dbReference type="ChEBI" id="CHEBI:15377"/>
        <dbReference type="ChEBI" id="CHEBI:15378"/>
        <dbReference type="ChEBI" id="CHEBI:30616"/>
        <dbReference type="ChEBI" id="CHEBI:43474"/>
        <dbReference type="ChEBI" id="CHEBI:456216"/>
        <dbReference type="EC" id="3.6.4.13"/>
    </reaction>
</comment>
<comment type="subunit">
    <text evidence="6">Heterodimer of a large and a small subunit. Interacts, via its helicase region, with the Nicotiana tabacum arginine decarboxylase 1A (ADC1A) C-terminal internal region (Ref.3).</text>
</comment>
<comment type="interaction">
    <interactant intactId="EBI-3504078">
        <id>P03586</id>
    </interactant>
    <interactant intactId="EBI-15623116">
        <id>Q75WV4</id>
        <label>N</label>
    </interactant>
    <organismsDiffer>true</organismsDiffer>
    <experiments>2</experiments>
</comment>
<comment type="interaction">
    <interactant intactId="EBI-1804464">
        <id>PRO_0000041163</id>
    </interactant>
    <interactant intactId="EBI-1809509">
        <id>B2C7Y6</id>
        <label>NRIP1</label>
    </interactant>
    <organismsDiffer>true</organismsDiffer>
    <experiments>4</experiments>
</comment>
<comment type="miscellaneous">
    <text evidence="4">This protein is translated as a fusion protein by episodic readthrough of a termination codon. When readthrough of the amber terminator codon TAG occurs between the codons for Gln-1116 and Gln-1118, this results in the addition of the RdRp region to the replicase.</text>
</comment>
<comment type="similarity">
    <text evidence="7">Belongs to the ssRNA positive-strand viruses RNA-directed RNA polymerase family.</text>
</comment>